<dbReference type="EC" id="5.2.1.8"/>
<dbReference type="EMBL" id="L14844">
    <property type="protein sequence ID" value="AAA20047.1"/>
    <property type="molecule type" value="mRNA"/>
</dbReference>
<dbReference type="EMBL" id="AL035656">
    <property type="protein sequence ID" value="CAB38608.1"/>
    <property type="molecule type" value="Genomic_DNA"/>
</dbReference>
<dbReference type="EMBL" id="AL161593">
    <property type="protein sequence ID" value="CAB80537.1"/>
    <property type="molecule type" value="Genomic_DNA"/>
</dbReference>
<dbReference type="EMBL" id="CP002687">
    <property type="protein sequence ID" value="AEE86970.1"/>
    <property type="molecule type" value="Genomic_DNA"/>
</dbReference>
<dbReference type="EMBL" id="AY093227">
    <property type="protein sequence ID" value="AAM13226.1"/>
    <property type="molecule type" value="mRNA"/>
</dbReference>
<dbReference type="EMBL" id="BT003397">
    <property type="protein sequence ID" value="AAO30060.1"/>
    <property type="molecule type" value="mRNA"/>
</dbReference>
<dbReference type="EMBL" id="AK226392">
    <property type="protein sequence ID" value="BAE98538.1"/>
    <property type="molecule type" value="mRNA"/>
</dbReference>
<dbReference type="EMBL" id="AY088103">
    <property type="protein sequence ID" value="AAM65649.1"/>
    <property type="molecule type" value="mRNA"/>
</dbReference>
<dbReference type="PIR" id="T06073">
    <property type="entry name" value="T06073"/>
</dbReference>
<dbReference type="RefSeq" id="NP_195585.1">
    <property type="nucleotide sequence ID" value="NM_120034.2"/>
</dbReference>
<dbReference type="SMR" id="P34790"/>
<dbReference type="BioGRID" id="15309">
    <property type="interactions" value="6"/>
</dbReference>
<dbReference type="FunCoup" id="P34790">
    <property type="interactions" value="2080"/>
</dbReference>
<dbReference type="IntAct" id="P34790">
    <property type="interactions" value="2"/>
</dbReference>
<dbReference type="STRING" id="3702.P34790"/>
<dbReference type="iPTMnet" id="P34790"/>
<dbReference type="MetOSite" id="P34790"/>
<dbReference type="PaxDb" id="3702-AT4G38740.1"/>
<dbReference type="ProteomicsDB" id="240659"/>
<dbReference type="EnsemblPlants" id="AT4G38740.1">
    <property type="protein sequence ID" value="AT4G38740.1"/>
    <property type="gene ID" value="AT4G38740"/>
</dbReference>
<dbReference type="GeneID" id="830029"/>
<dbReference type="Gramene" id="AT4G38740.1">
    <property type="protein sequence ID" value="AT4G38740.1"/>
    <property type="gene ID" value="AT4G38740"/>
</dbReference>
<dbReference type="KEGG" id="ath:AT4G38740"/>
<dbReference type="Araport" id="AT4G38740"/>
<dbReference type="TAIR" id="AT4G38740">
    <property type="gene designation" value="ROC1"/>
</dbReference>
<dbReference type="eggNOG" id="KOG0865">
    <property type="taxonomic scope" value="Eukaryota"/>
</dbReference>
<dbReference type="HOGENOM" id="CLU_012062_4_2_1"/>
<dbReference type="InParanoid" id="P34790"/>
<dbReference type="OMA" id="ENFKRTH"/>
<dbReference type="OrthoDB" id="193499at2759"/>
<dbReference type="PhylomeDB" id="P34790"/>
<dbReference type="BRENDA" id="5.2.1.8">
    <property type="organism ID" value="399"/>
</dbReference>
<dbReference type="CD-CODE" id="4299E36E">
    <property type="entry name" value="Nucleolus"/>
</dbReference>
<dbReference type="PRO" id="PR:P34790"/>
<dbReference type="Proteomes" id="UP000006548">
    <property type="component" value="Chromosome 4"/>
</dbReference>
<dbReference type="ExpressionAtlas" id="P34790">
    <property type="expression patterns" value="baseline and differential"/>
</dbReference>
<dbReference type="GO" id="GO:0048046">
    <property type="term" value="C:apoplast"/>
    <property type="evidence" value="ECO:0007005"/>
    <property type="project" value="TAIR"/>
</dbReference>
<dbReference type="GO" id="GO:0005829">
    <property type="term" value="C:cytosol"/>
    <property type="evidence" value="ECO:0007005"/>
    <property type="project" value="TAIR"/>
</dbReference>
<dbReference type="GO" id="GO:0005886">
    <property type="term" value="C:plasma membrane"/>
    <property type="evidence" value="ECO:0007005"/>
    <property type="project" value="TAIR"/>
</dbReference>
<dbReference type="GO" id="GO:0003755">
    <property type="term" value="F:peptidyl-prolyl cis-trans isomerase activity"/>
    <property type="evidence" value="ECO:0000250"/>
    <property type="project" value="TAIR"/>
</dbReference>
<dbReference type="GO" id="GO:0009785">
    <property type="term" value="P:blue light signaling pathway"/>
    <property type="evidence" value="ECO:0000316"/>
    <property type="project" value="TAIR"/>
</dbReference>
<dbReference type="GO" id="GO:0009742">
    <property type="term" value="P:brassinosteroid mediated signaling pathway"/>
    <property type="evidence" value="ECO:0000316"/>
    <property type="project" value="TAIR"/>
</dbReference>
<dbReference type="GO" id="GO:0009704">
    <property type="term" value="P:de-etiolation"/>
    <property type="evidence" value="ECO:0000315"/>
    <property type="project" value="TAIR"/>
</dbReference>
<dbReference type="GO" id="GO:0009626">
    <property type="term" value="P:plant-type hypersensitive response"/>
    <property type="evidence" value="ECO:0007669"/>
    <property type="project" value="UniProtKB-KW"/>
</dbReference>
<dbReference type="GO" id="GO:0006457">
    <property type="term" value="P:protein folding"/>
    <property type="evidence" value="ECO:0007669"/>
    <property type="project" value="InterPro"/>
</dbReference>
<dbReference type="GO" id="GO:0009585">
    <property type="term" value="P:red, far-red light phototransduction"/>
    <property type="evidence" value="ECO:0000316"/>
    <property type="project" value="TAIR"/>
</dbReference>
<dbReference type="GO" id="GO:0001932">
    <property type="term" value="P:regulation of protein phosphorylation"/>
    <property type="evidence" value="ECO:0000315"/>
    <property type="project" value="TAIR"/>
</dbReference>
<dbReference type="GO" id="GO:0009416">
    <property type="term" value="P:response to light stimulus"/>
    <property type="evidence" value="ECO:0000270"/>
    <property type="project" value="TAIR"/>
</dbReference>
<dbReference type="GO" id="GO:0007165">
    <property type="term" value="P:signal transduction"/>
    <property type="evidence" value="ECO:0000250"/>
    <property type="project" value="TAIR"/>
</dbReference>
<dbReference type="CDD" id="cd01926">
    <property type="entry name" value="cyclophilin_ABH_like"/>
    <property type="match status" value="1"/>
</dbReference>
<dbReference type="FunFam" id="2.40.100.10:FF:000002">
    <property type="entry name" value="Peptidyl-prolyl cis-trans isomerase"/>
    <property type="match status" value="1"/>
</dbReference>
<dbReference type="Gene3D" id="2.40.100.10">
    <property type="entry name" value="Cyclophilin-like"/>
    <property type="match status" value="1"/>
</dbReference>
<dbReference type="InterPro" id="IPR029000">
    <property type="entry name" value="Cyclophilin-like_dom_sf"/>
</dbReference>
<dbReference type="InterPro" id="IPR024936">
    <property type="entry name" value="Cyclophilin-type_PPIase"/>
</dbReference>
<dbReference type="InterPro" id="IPR020892">
    <property type="entry name" value="Cyclophilin-type_PPIase_CS"/>
</dbReference>
<dbReference type="InterPro" id="IPR002130">
    <property type="entry name" value="Cyclophilin-type_PPIase_dom"/>
</dbReference>
<dbReference type="PANTHER" id="PTHR11071">
    <property type="entry name" value="PEPTIDYL-PROLYL CIS-TRANS ISOMERASE"/>
    <property type="match status" value="1"/>
</dbReference>
<dbReference type="PANTHER" id="PTHR11071:SF561">
    <property type="entry name" value="PEPTIDYL-PROLYL CIS-TRANS ISOMERASE D-RELATED"/>
    <property type="match status" value="1"/>
</dbReference>
<dbReference type="Pfam" id="PF00160">
    <property type="entry name" value="Pro_isomerase"/>
    <property type="match status" value="1"/>
</dbReference>
<dbReference type="PIRSF" id="PIRSF001467">
    <property type="entry name" value="Peptidylpro_ismrse"/>
    <property type="match status" value="1"/>
</dbReference>
<dbReference type="PRINTS" id="PR00153">
    <property type="entry name" value="CSAPPISMRASE"/>
</dbReference>
<dbReference type="SUPFAM" id="SSF50891">
    <property type="entry name" value="Cyclophilin-like"/>
    <property type="match status" value="1"/>
</dbReference>
<dbReference type="PROSITE" id="PS00170">
    <property type="entry name" value="CSA_PPIASE_1"/>
    <property type="match status" value="1"/>
</dbReference>
<dbReference type="PROSITE" id="PS50072">
    <property type="entry name" value="CSA_PPIASE_2"/>
    <property type="match status" value="1"/>
</dbReference>
<protein>
    <recommendedName>
        <fullName>Peptidyl-prolyl cis-trans isomerase CYP18-3</fullName>
        <shortName>PPIase CYP18-3</shortName>
        <ecNumber>5.2.1.8</ecNumber>
    </recommendedName>
    <alternativeName>
        <fullName>Cyclophilin of 18 kDa 3</fullName>
    </alternativeName>
    <alternativeName>
        <fullName>Cyclosporin A-binding protein</fullName>
    </alternativeName>
    <alternativeName>
        <fullName>Rotamase cyclophilin-1</fullName>
    </alternativeName>
</protein>
<feature type="chain" id="PRO_0000064133" description="Peptidyl-prolyl cis-trans isomerase CYP18-3">
    <location>
        <begin position="1"/>
        <end position="172"/>
    </location>
</feature>
<feature type="domain" description="PPIase cyclophilin-type" evidence="1">
    <location>
        <begin position="7"/>
        <end position="170"/>
    </location>
</feature>
<feature type="mutagenesis site" description="Loss of PPIase activity." evidence="4">
    <original>R</original>
    <variation>A</variation>
    <location>
        <position position="62"/>
    </location>
</feature>
<feature type="mutagenesis site" description="Loss of PPIase activity." evidence="4">
    <original>W</original>
    <variation>A</variation>
    <location>
        <position position="128"/>
    </location>
</feature>
<feature type="mutagenesis site" description="Decreased PPIase activity." evidence="4">
    <original>H</original>
    <variation>A</variation>
    <location>
        <position position="133"/>
    </location>
</feature>
<organism>
    <name type="scientific">Arabidopsis thaliana</name>
    <name type="common">Mouse-ear cress</name>
    <dbReference type="NCBI Taxonomy" id="3702"/>
    <lineage>
        <taxon>Eukaryota</taxon>
        <taxon>Viridiplantae</taxon>
        <taxon>Streptophyta</taxon>
        <taxon>Embryophyta</taxon>
        <taxon>Tracheophyta</taxon>
        <taxon>Spermatophyta</taxon>
        <taxon>Magnoliopsida</taxon>
        <taxon>eudicotyledons</taxon>
        <taxon>Gunneridae</taxon>
        <taxon>Pentapetalae</taxon>
        <taxon>rosids</taxon>
        <taxon>malvids</taxon>
        <taxon>Brassicales</taxon>
        <taxon>Brassicaceae</taxon>
        <taxon>Camelineae</taxon>
        <taxon>Arabidopsis</taxon>
    </lineage>
</organism>
<keyword id="KW-0143">Chaperone</keyword>
<keyword id="KW-0963">Cytoplasm</keyword>
<keyword id="KW-0381">Hypersensitive response</keyword>
<keyword id="KW-0413">Isomerase</keyword>
<keyword id="KW-0611">Plant defense</keyword>
<keyword id="KW-1185">Reference proteome</keyword>
<keyword id="KW-0697">Rotamase</keyword>
<accession>P34790</accession>
<accession>Q0WWG0</accession>
<comment type="function">
    <text evidence="3 4 5 6">PPIases accelerate the folding of proteins. It catalyzes the cis-trans isomerization of proline imidic peptide bonds in oligopeptides. Involved in de-etiolation. Reduces the sensitivity to brassinosteroids by decreasing somehow the abundance of the partially dephosphorylated form of BES1. Triggers the activation of bacterial AvrRpt2 protease activity upon infection by P.syringae. Activated AvrRpt2 confers virulence in plant lacking the RPS2 resistance gene. In plants expressing RPS2, the AvrRpt2-mediated degradation of RIN4 activates RPS2, which induces hypersensitive response (HR) and plant resistance.</text>
</comment>
<comment type="catalytic activity">
    <reaction>
        <text>[protein]-peptidylproline (omega=180) = [protein]-peptidylproline (omega=0)</text>
        <dbReference type="Rhea" id="RHEA:16237"/>
        <dbReference type="Rhea" id="RHEA-COMP:10747"/>
        <dbReference type="Rhea" id="RHEA-COMP:10748"/>
        <dbReference type="ChEBI" id="CHEBI:83833"/>
        <dbReference type="ChEBI" id="CHEBI:83834"/>
        <dbReference type="EC" id="5.2.1.8"/>
    </reaction>
</comment>
<comment type="activity regulation">
    <text>Binds cyclosporin A (CsA). CsA mediates some of its effects via an inhibitory action on PPIase.</text>
</comment>
<comment type="subunit">
    <text evidence="3 4 5 9">Interacts with P.syringae AvrRpt2 and with A.tumefaciens VirD2, but not with BES1.</text>
</comment>
<comment type="subcellular location">
    <subcellularLocation>
        <location evidence="10">Cytoplasm</location>
    </subcellularLocation>
</comment>
<comment type="tissue specificity">
    <text evidence="2 7">Ubiquitous.</text>
</comment>
<comment type="induction">
    <text evidence="2 6 8">Up-regulated by light, salt and wounding. Down-regulated by cytokinin treatment.</text>
</comment>
<comment type="similarity">
    <text evidence="10">Belongs to the cyclophilin-type PPIase family.</text>
</comment>
<name>CP18C_ARATH</name>
<evidence type="ECO:0000255" key="1">
    <source>
        <dbReference type="PROSITE-ProRule" id="PRU00156"/>
    </source>
</evidence>
<evidence type="ECO:0000269" key="2">
    <source>
    </source>
</evidence>
<evidence type="ECO:0000269" key="3">
    <source>
    </source>
</evidence>
<evidence type="ECO:0000269" key="4">
    <source>
    </source>
</evidence>
<evidence type="ECO:0000269" key="5">
    <source>
    </source>
</evidence>
<evidence type="ECO:0000269" key="6">
    <source>
    </source>
</evidence>
<evidence type="ECO:0000269" key="7">
    <source>
    </source>
</evidence>
<evidence type="ECO:0000269" key="8">
    <source>
    </source>
</evidence>
<evidence type="ECO:0000269" key="9">
    <source>
    </source>
</evidence>
<evidence type="ECO:0000305" key="10"/>
<sequence>MAFPKVYFDMTIDGQPAGRIVMELYTDKTPRTAENFRALCTGEKGVGGTGKPLHFKGSKFHRVIPNFMCQGGDFTAGNGTGGESIYGSKFEDENFERKHTGPGILSMANAGANTNGSQFFICTVKTDWLDGKHVVFGQVVEGLDVVKAIEKVGSSSGKPTKPVVVADCGQLS</sequence>
<proteinExistence type="evidence at protein level"/>
<gene>
    <name type="primary">CYP18-3</name>
    <name type="synonym">ROC1</name>
    <name type="ordered locus">At4g38740</name>
    <name type="ORF">T9A14.20</name>
</gene>
<reference key="1">
    <citation type="journal article" date="1994" name="J. Biol. Chem.">
        <title>Cloning and characterization of chloroplast and cytosolic forms of cyclophilin from Arabidopsis thaliana.</title>
        <authorList>
            <person name="Lippuner V."/>
            <person name="Chou I.T."/>
            <person name="Scott S.V."/>
            <person name="Ettinger W.F."/>
            <person name="Theg S.M."/>
            <person name="Gasser C.S."/>
        </authorList>
    </citation>
    <scope>NUCLEOTIDE SEQUENCE [MRNA]</scope>
    <scope>TISSUE SPECIFICITY</scope>
    <source>
        <strain>cv. Columbia</strain>
        <tissue>Leaf</tissue>
    </source>
</reference>
<reference key="2">
    <citation type="journal article" date="1999" name="Nature">
        <title>Sequence and analysis of chromosome 4 of the plant Arabidopsis thaliana.</title>
        <authorList>
            <person name="Mayer K.F.X."/>
            <person name="Schueller C."/>
            <person name="Wambutt R."/>
            <person name="Murphy G."/>
            <person name="Volckaert G."/>
            <person name="Pohl T."/>
            <person name="Duesterhoeft A."/>
            <person name="Stiekema W."/>
            <person name="Entian K.-D."/>
            <person name="Terryn N."/>
            <person name="Harris B."/>
            <person name="Ansorge W."/>
            <person name="Brandt P."/>
            <person name="Grivell L.A."/>
            <person name="Rieger M."/>
            <person name="Weichselgartner M."/>
            <person name="de Simone V."/>
            <person name="Obermaier B."/>
            <person name="Mache R."/>
            <person name="Mueller M."/>
            <person name="Kreis M."/>
            <person name="Delseny M."/>
            <person name="Puigdomenech P."/>
            <person name="Watson M."/>
            <person name="Schmidtheini T."/>
            <person name="Reichert B."/>
            <person name="Portetelle D."/>
            <person name="Perez-Alonso M."/>
            <person name="Boutry M."/>
            <person name="Bancroft I."/>
            <person name="Vos P."/>
            <person name="Hoheisel J."/>
            <person name="Zimmermann W."/>
            <person name="Wedler H."/>
            <person name="Ridley P."/>
            <person name="Langham S.-A."/>
            <person name="McCullagh B."/>
            <person name="Bilham L."/>
            <person name="Robben J."/>
            <person name="van der Schueren J."/>
            <person name="Grymonprez B."/>
            <person name="Chuang Y.-J."/>
            <person name="Vandenbussche F."/>
            <person name="Braeken M."/>
            <person name="Weltjens I."/>
            <person name="Voet M."/>
            <person name="Bastiaens I."/>
            <person name="Aert R."/>
            <person name="Defoor E."/>
            <person name="Weitzenegger T."/>
            <person name="Bothe G."/>
            <person name="Ramsperger U."/>
            <person name="Hilbert H."/>
            <person name="Braun M."/>
            <person name="Holzer E."/>
            <person name="Brandt A."/>
            <person name="Peters S."/>
            <person name="van Staveren M."/>
            <person name="Dirkse W."/>
            <person name="Mooijman P."/>
            <person name="Klein Lankhorst R."/>
            <person name="Rose M."/>
            <person name="Hauf J."/>
            <person name="Koetter P."/>
            <person name="Berneiser S."/>
            <person name="Hempel S."/>
            <person name="Feldpausch M."/>
            <person name="Lamberth S."/>
            <person name="Van den Daele H."/>
            <person name="De Keyser A."/>
            <person name="Buysshaert C."/>
            <person name="Gielen J."/>
            <person name="Villarroel R."/>
            <person name="De Clercq R."/>
            <person name="van Montagu M."/>
            <person name="Rogers J."/>
            <person name="Cronin A."/>
            <person name="Quail M.A."/>
            <person name="Bray-Allen S."/>
            <person name="Clark L."/>
            <person name="Doggett J."/>
            <person name="Hall S."/>
            <person name="Kay M."/>
            <person name="Lennard N."/>
            <person name="McLay K."/>
            <person name="Mayes R."/>
            <person name="Pettett A."/>
            <person name="Rajandream M.A."/>
            <person name="Lyne M."/>
            <person name="Benes V."/>
            <person name="Rechmann S."/>
            <person name="Borkova D."/>
            <person name="Bloecker H."/>
            <person name="Scharfe M."/>
            <person name="Grimm M."/>
            <person name="Loehnert T.-H."/>
            <person name="Dose S."/>
            <person name="de Haan M."/>
            <person name="Maarse A.C."/>
            <person name="Schaefer M."/>
            <person name="Mueller-Auer S."/>
            <person name="Gabel C."/>
            <person name="Fuchs M."/>
            <person name="Fartmann B."/>
            <person name="Granderath K."/>
            <person name="Dauner D."/>
            <person name="Herzl A."/>
            <person name="Neumann S."/>
            <person name="Argiriou A."/>
            <person name="Vitale D."/>
            <person name="Liguori R."/>
            <person name="Piravandi E."/>
            <person name="Massenet O."/>
            <person name="Quigley F."/>
            <person name="Clabauld G."/>
            <person name="Muendlein A."/>
            <person name="Felber R."/>
            <person name="Schnabl S."/>
            <person name="Hiller R."/>
            <person name="Schmidt W."/>
            <person name="Lecharny A."/>
            <person name="Aubourg S."/>
            <person name="Chefdor F."/>
            <person name="Cooke R."/>
            <person name="Berger C."/>
            <person name="Monfort A."/>
            <person name="Casacuberta E."/>
            <person name="Gibbons T."/>
            <person name="Weber N."/>
            <person name="Vandenbol M."/>
            <person name="Bargues M."/>
            <person name="Terol J."/>
            <person name="Torres A."/>
            <person name="Perez-Perez A."/>
            <person name="Purnelle B."/>
            <person name="Bent E."/>
            <person name="Johnson S."/>
            <person name="Tacon D."/>
            <person name="Jesse T."/>
            <person name="Heijnen L."/>
            <person name="Schwarz S."/>
            <person name="Scholler P."/>
            <person name="Heber S."/>
            <person name="Francs P."/>
            <person name="Bielke C."/>
            <person name="Frishman D."/>
            <person name="Haase D."/>
            <person name="Lemcke K."/>
            <person name="Mewes H.-W."/>
            <person name="Stocker S."/>
            <person name="Zaccaria P."/>
            <person name="Bevan M."/>
            <person name="Wilson R.K."/>
            <person name="de la Bastide M."/>
            <person name="Habermann K."/>
            <person name="Parnell L."/>
            <person name="Dedhia N."/>
            <person name="Gnoj L."/>
            <person name="Schutz K."/>
            <person name="Huang E."/>
            <person name="Spiegel L."/>
            <person name="Sekhon M."/>
            <person name="Murray J."/>
            <person name="Sheet P."/>
            <person name="Cordes M."/>
            <person name="Abu-Threideh J."/>
            <person name="Stoneking T."/>
            <person name="Kalicki J."/>
            <person name="Graves T."/>
            <person name="Harmon G."/>
            <person name="Edwards J."/>
            <person name="Latreille P."/>
            <person name="Courtney L."/>
            <person name="Cloud J."/>
            <person name="Abbott A."/>
            <person name="Scott K."/>
            <person name="Johnson D."/>
            <person name="Minx P."/>
            <person name="Bentley D."/>
            <person name="Fulton B."/>
            <person name="Miller N."/>
            <person name="Greco T."/>
            <person name="Kemp K."/>
            <person name="Kramer J."/>
            <person name="Fulton L."/>
            <person name="Mardis E."/>
            <person name="Dante M."/>
            <person name="Pepin K."/>
            <person name="Hillier L.W."/>
            <person name="Nelson J."/>
            <person name="Spieth J."/>
            <person name="Ryan E."/>
            <person name="Andrews S."/>
            <person name="Geisel C."/>
            <person name="Layman D."/>
            <person name="Du H."/>
            <person name="Ali J."/>
            <person name="Berghoff A."/>
            <person name="Jones K."/>
            <person name="Drone K."/>
            <person name="Cotton M."/>
            <person name="Joshu C."/>
            <person name="Antonoiu B."/>
            <person name="Zidanic M."/>
            <person name="Strong C."/>
            <person name="Sun H."/>
            <person name="Lamar B."/>
            <person name="Yordan C."/>
            <person name="Ma P."/>
            <person name="Zhong J."/>
            <person name="Preston R."/>
            <person name="Vil D."/>
            <person name="Shekher M."/>
            <person name="Matero A."/>
            <person name="Shah R."/>
            <person name="Swaby I.K."/>
            <person name="O'Shaughnessy A."/>
            <person name="Rodriguez M."/>
            <person name="Hoffman J."/>
            <person name="Till S."/>
            <person name="Granat S."/>
            <person name="Shohdy N."/>
            <person name="Hasegawa A."/>
            <person name="Hameed A."/>
            <person name="Lodhi M."/>
            <person name="Johnson A."/>
            <person name="Chen E."/>
            <person name="Marra M.A."/>
            <person name="Martienssen R."/>
            <person name="McCombie W.R."/>
        </authorList>
    </citation>
    <scope>NUCLEOTIDE SEQUENCE [LARGE SCALE GENOMIC DNA]</scope>
    <source>
        <strain>cv. Columbia</strain>
    </source>
</reference>
<reference key="3">
    <citation type="journal article" date="2017" name="Plant J.">
        <title>Araport11: a complete reannotation of the Arabidopsis thaliana reference genome.</title>
        <authorList>
            <person name="Cheng C.Y."/>
            <person name="Krishnakumar V."/>
            <person name="Chan A.P."/>
            <person name="Thibaud-Nissen F."/>
            <person name="Schobel S."/>
            <person name="Town C.D."/>
        </authorList>
    </citation>
    <scope>GENOME REANNOTATION</scope>
    <source>
        <strain>cv. Columbia</strain>
    </source>
</reference>
<reference key="4">
    <citation type="journal article" date="2003" name="Science">
        <title>Empirical analysis of transcriptional activity in the Arabidopsis genome.</title>
        <authorList>
            <person name="Yamada K."/>
            <person name="Lim J."/>
            <person name="Dale J.M."/>
            <person name="Chen H."/>
            <person name="Shinn P."/>
            <person name="Palm C.J."/>
            <person name="Southwick A.M."/>
            <person name="Wu H.C."/>
            <person name="Kim C.J."/>
            <person name="Nguyen M."/>
            <person name="Pham P.K."/>
            <person name="Cheuk R.F."/>
            <person name="Karlin-Newmann G."/>
            <person name="Liu S.X."/>
            <person name="Lam B."/>
            <person name="Sakano H."/>
            <person name="Wu T."/>
            <person name="Yu G."/>
            <person name="Miranda M."/>
            <person name="Quach H.L."/>
            <person name="Tripp M."/>
            <person name="Chang C.H."/>
            <person name="Lee J.M."/>
            <person name="Toriumi M.J."/>
            <person name="Chan M.M."/>
            <person name="Tang C.C."/>
            <person name="Onodera C.S."/>
            <person name="Deng J.M."/>
            <person name="Akiyama K."/>
            <person name="Ansari Y."/>
            <person name="Arakawa T."/>
            <person name="Banh J."/>
            <person name="Banno F."/>
            <person name="Bowser L."/>
            <person name="Brooks S.Y."/>
            <person name="Carninci P."/>
            <person name="Chao Q."/>
            <person name="Choy N."/>
            <person name="Enju A."/>
            <person name="Goldsmith A.D."/>
            <person name="Gurjal M."/>
            <person name="Hansen N.F."/>
            <person name="Hayashizaki Y."/>
            <person name="Johnson-Hopson C."/>
            <person name="Hsuan V.W."/>
            <person name="Iida K."/>
            <person name="Karnes M."/>
            <person name="Khan S."/>
            <person name="Koesema E."/>
            <person name="Ishida J."/>
            <person name="Jiang P.X."/>
            <person name="Jones T."/>
            <person name="Kawai J."/>
            <person name="Kamiya A."/>
            <person name="Meyers C."/>
            <person name="Nakajima M."/>
            <person name="Narusaka M."/>
            <person name="Seki M."/>
            <person name="Sakurai T."/>
            <person name="Satou M."/>
            <person name="Tamse R."/>
            <person name="Vaysberg M."/>
            <person name="Wallender E.K."/>
            <person name="Wong C."/>
            <person name="Yamamura Y."/>
            <person name="Yuan S."/>
            <person name="Shinozaki K."/>
            <person name="Davis R.W."/>
            <person name="Theologis A."/>
            <person name="Ecker J.R."/>
        </authorList>
    </citation>
    <scope>NUCLEOTIDE SEQUENCE [LARGE SCALE MRNA]</scope>
    <source>
        <strain>cv. Columbia</strain>
    </source>
</reference>
<reference key="5">
    <citation type="submission" date="2006-07" db="EMBL/GenBank/DDBJ databases">
        <title>Large-scale analysis of RIKEN Arabidopsis full-length (RAFL) cDNAs.</title>
        <authorList>
            <person name="Totoki Y."/>
            <person name="Seki M."/>
            <person name="Ishida J."/>
            <person name="Nakajima M."/>
            <person name="Enju A."/>
            <person name="Kamiya A."/>
            <person name="Narusaka M."/>
            <person name="Shin-i T."/>
            <person name="Nakagawa M."/>
            <person name="Sakamoto N."/>
            <person name="Oishi K."/>
            <person name="Kohara Y."/>
            <person name="Kobayashi M."/>
            <person name="Toyoda A."/>
            <person name="Sakaki Y."/>
            <person name="Sakurai T."/>
            <person name="Iida K."/>
            <person name="Akiyama K."/>
            <person name="Satou M."/>
            <person name="Toyoda T."/>
            <person name="Konagaya A."/>
            <person name="Carninci P."/>
            <person name="Kawai J."/>
            <person name="Hayashizaki Y."/>
            <person name="Shinozaki K."/>
        </authorList>
    </citation>
    <scope>NUCLEOTIDE SEQUENCE [LARGE SCALE MRNA]</scope>
    <source>
        <strain>cv. Columbia</strain>
    </source>
</reference>
<reference key="6">
    <citation type="submission" date="2002-03" db="EMBL/GenBank/DDBJ databases">
        <title>Full-length cDNA from Arabidopsis thaliana.</title>
        <authorList>
            <person name="Brover V.V."/>
            <person name="Troukhan M.E."/>
            <person name="Alexandrov N.A."/>
            <person name="Lu Y.-P."/>
            <person name="Flavell R.B."/>
            <person name="Feldmann K.A."/>
        </authorList>
    </citation>
    <scope>NUCLEOTIDE SEQUENCE [LARGE SCALE MRNA]</scope>
</reference>
<reference key="7">
    <citation type="journal article" date="1997" name="Plant Mol. Biol.">
        <title>Characterization of the cyclophilin gene family of Arabidopsis thaliana and phylogenetic analysis of known cyclophilin proteins.</title>
        <authorList>
            <person name="Chou I.T."/>
            <person name="Gasser C.S."/>
        </authorList>
    </citation>
    <scope>INDUCTION</scope>
    <source>
        <strain>cv. Columbia</strain>
        <tissue>Leaf</tissue>
    </source>
</reference>
<reference key="8">
    <citation type="journal article" date="1998" name="Proc. Natl. Acad. Sci. U.S.A.">
        <title>Agrobacterium VirD2 protein interacts with plant host cyclophilins.</title>
        <authorList>
            <person name="Deng W."/>
            <person name="Chen L."/>
            <person name="Wood D.W."/>
            <person name="Metcalfe T."/>
            <person name="Liang X."/>
            <person name="Gordon M.P."/>
            <person name="Comai L."/>
            <person name="Nester E.W."/>
        </authorList>
    </citation>
    <scope>INTERACTION WITH AGROBACTERIUM VIRD2</scope>
</reference>
<reference key="9">
    <citation type="journal article" date="2004" name="Plant Physiol.">
        <title>Immunophilins and parvulins. Superfamily of peptidyl prolyl isomerases in Arabidopsis.</title>
        <authorList>
            <person name="He Z."/>
            <person name="Li L."/>
            <person name="Luan S."/>
        </authorList>
    </citation>
    <scope>TISSUE SPECIFICITY</scope>
    <scope>GENE FAMILY</scope>
    <scope>NOMENCLATURE</scope>
    <scope>INDUCTION</scope>
</reference>
<reference key="10">
    <citation type="journal article" date="2004" name="Plant Physiol.">
        <title>The Arabidopsis cyclophilin gene family.</title>
        <authorList>
            <person name="Romano P.G.N."/>
            <person name="Horton P."/>
            <person name="Gray J.E."/>
        </authorList>
    </citation>
    <scope>GENE FAMILY</scope>
    <scope>NOMENCLATURE</scope>
</reference>
<reference key="11">
    <citation type="journal article" date="2005" name="Science">
        <title>Activation of a phytopathogenic bacterial effector protein by a eukaryotic cyclophilin.</title>
        <authorList>
            <person name="Coaker G."/>
            <person name="Falick A."/>
            <person name="Staskawicz B.J."/>
        </authorList>
    </citation>
    <scope>FUNCTION</scope>
    <scope>INTERACTION WITH AVRRPT2</scope>
</reference>
<reference key="12">
    <citation type="journal article" date="2006" name="Mol. Microbiol.">
        <title>Eukaryotic cyclophilin as a molecular switch for effector activation.</title>
        <authorList>
            <person name="Coaker G."/>
            <person name="Zhu G."/>
            <person name="Ding Z."/>
            <person name="Van Doren S.R."/>
            <person name="Staskawicz B."/>
        </authorList>
    </citation>
    <scope>FUNCTION</scope>
    <scope>MUTAGENESIS OF ARG-62; TRP-128 AND HIS-133</scope>
    <scope>3D-STRUCTURE MODELING</scope>
    <scope>INTERACTION WITH AVRRPT2</scope>
</reference>
<reference key="13">
    <citation type="journal article" date="2010" name="Biochemistry">
        <title>Role of prolyl cis/trans isomers in cyclophilin-assisted Pseudomonas syringae AvrRpt2 protease activation.</title>
        <authorList>
            <person name="Aumueller T."/>
            <person name="Jahreis G."/>
            <person name="Fischer G."/>
            <person name="Schiene-Fischer C."/>
        </authorList>
    </citation>
    <scope>FUNCTION</scope>
    <scope>INTERACTION WITH AVRRPT2</scope>
</reference>
<reference key="14">
    <citation type="journal article" date="2012" name="Plant J.">
        <title>The cyclophilin ROC1 links phytochrome and cryptochrome to brassinosteroid sensitivity.</title>
        <authorList>
            <person name="Trupkin S.A."/>
            <person name="Mora-Garcia S."/>
            <person name="Casal J.J."/>
        </authorList>
    </citation>
    <scope>FUNCTION</scope>
    <scope>INDUCTION BY LIGHT</scope>
    <scope>LACK OF INTERACTION WITH BES1</scope>
</reference>